<reference key="1">
    <citation type="journal article" date="2009" name="Vaccine">
        <title>Whole genome sequence analysis of Mycobacterium bovis bacillus Calmette-Guerin (BCG) Tokyo 172: a comparative study of BCG vaccine substrains.</title>
        <authorList>
            <person name="Seki M."/>
            <person name="Honda I."/>
            <person name="Fujita I."/>
            <person name="Yano I."/>
            <person name="Yamamoto S."/>
            <person name="Koyama A."/>
        </authorList>
    </citation>
    <scope>NUCLEOTIDE SEQUENCE [LARGE SCALE GENOMIC DNA]</scope>
    <source>
        <strain>BCG / Tokyo 172 / ATCC 35737 / TMC 1019</strain>
    </source>
</reference>
<gene>
    <name evidence="1" type="primary">dnaA</name>
    <name type="ordered locus">JTY_0001</name>
</gene>
<dbReference type="EMBL" id="AP010918">
    <property type="protein sequence ID" value="BAH24303.1"/>
    <property type="molecule type" value="Genomic_DNA"/>
</dbReference>
<dbReference type="RefSeq" id="WP_011799063.1">
    <property type="nucleotide sequence ID" value="NZ_CP014566.1"/>
</dbReference>
<dbReference type="SMR" id="C1AIZ8"/>
<dbReference type="KEGG" id="mbt:JTY_0001"/>
<dbReference type="HOGENOM" id="CLU_026910_2_0_11"/>
<dbReference type="GO" id="GO:0005737">
    <property type="term" value="C:cytoplasm"/>
    <property type="evidence" value="ECO:0007669"/>
    <property type="project" value="UniProtKB-SubCell"/>
</dbReference>
<dbReference type="GO" id="GO:0005886">
    <property type="term" value="C:plasma membrane"/>
    <property type="evidence" value="ECO:0007669"/>
    <property type="project" value="TreeGrafter"/>
</dbReference>
<dbReference type="GO" id="GO:0005524">
    <property type="term" value="F:ATP binding"/>
    <property type="evidence" value="ECO:0007669"/>
    <property type="project" value="UniProtKB-UniRule"/>
</dbReference>
<dbReference type="GO" id="GO:0016887">
    <property type="term" value="F:ATP hydrolysis activity"/>
    <property type="evidence" value="ECO:0007669"/>
    <property type="project" value="InterPro"/>
</dbReference>
<dbReference type="GO" id="GO:0003688">
    <property type="term" value="F:DNA replication origin binding"/>
    <property type="evidence" value="ECO:0007669"/>
    <property type="project" value="UniProtKB-UniRule"/>
</dbReference>
<dbReference type="GO" id="GO:0008289">
    <property type="term" value="F:lipid binding"/>
    <property type="evidence" value="ECO:0007669"/>
    <property type="project" value="UniProtKB-KW"/>
</dbReference>
<dbReference type="GO" id="GO:0006270">
    <property type="term" value="P:DNA replication initiation"/>
    <property type="evidence" value="ECO:0007669"/>
    <property type="project" value="UniProtKB-UniRule"/>
</dbReference>
<dbReference type="GO" id="GO:0006275">
    <property type="term" value="P:regulation of DNA replication"/>
    <property type="evidence" value="ECO:0007669"/>
    <property type="project" value="UniProtKB-UniRule"/>
</dbReference>
<dbReference type="CDD" id="cd00009">
    <property type="entry name" value="AAA"/>
    <property type="match status" value="1"/>
</dbReference>
<dbReference type="CDD" id="cd06571">
    <property type="entry name" value="Bac_DnaA_C"/>
    <property type="match status" value="1"/>
</dbReference>
<dbReference type="FunFam" id="1.10.1750.10:FF:000002">
    <property type="entry name" value="Chromosomal replication initiator protein DnaA"/>
    <property type="match status" value="1"/>
</dbReference>
<dbReference type="FunFam" id="1.10.8.60:FF:000003">
    <property type="entry name" value="Chromosomal replication initiator protein DnaA"/>
    <property type="match status" value="1"/>
</dbReference>
<dbReference type="FunFam" id="3.40.50.300:FF:000150">
    <property type="entry name" value="Chromosomal replication initiator protein DnaA"/>
    <property type="match status" value="1"/>
</dbReference>
<dbReference type="Gene3D" id="1.10.1750.10">
    <property type="match status" value="1"/>
</dbReference>
<dbReference type="Gene3D" id="1.10.8.60">
    <property type="match status" value="1"/>
</dbReference>
<dbReference type="Gene3D" id="3.30.300.180">
    <property type="match status" value="1"/>
</dbReference>
<dbReference type="Gene3D" id="3.40.50.300">
    <property type="entry name" value="P-loop containing nucleotide triphosphate hydrolases"/>
    <property type="match status" value="1"/>
</dbReference>
<dbReference type="HAMAP" id="MF_00377">
    <property type="entry name" value="DnaA_bact"/>
    <property type="match status" value="1"/>
</dbReference>
<dbReference type="InterPro" id="IPR003593">
    <property type="entry name" value="AAA+_ATPase"/>
</dbReference>
<dbReference type="InterPro" id="IPR001957">
    <property type="entry name" value="Chromosome_initiator_DnaA"/>
</dbReference>
<dbReference type="InterPro" id="IPR020591">
    <property type="entry name" value="Chromosome_initiator_DnaA-like"/>
</dbReference>
<dbReference type="InterPro" id="IPR018312">
    <property type="entry name" value="Chromosome_initiator_DnaA_CS"/>
</dbReference>
<dbReference type="InterPro" id="IPR013159">
    <property type="entry name" value="DnaA_C"/>
</dbReference>
<dbReference type="InterPro" id="IPR013317">
    <property type="entry name" value="DnaA_dom"/>
</dbReference>
<dbReference type="InterPro" id="IPR038454">
    <property type="entry name" value="DnaA_N_sf"/>
</dbReference>
<dbReference type="InterPro" id="IPR027417">
    <property type="entry name" value="P-loop_NTPase"/>
</dbReference>
<dbReference type="InterPro" id="IPR010921">
    <property type="entry name" value="Trp_repressor/repl_initiator"/>
</dbReference>
<dbReference type="NCBIfam" id="TIGR00362">
    <property type="entry name" value="DnaA"/>
    <property type="match status" value="1"/>
</dbReference>
<dbReference type="NCBIfam" id="NF010686">
    <property type="entry name" value="PRK14086.1"/>
    <property type="match status" value="1"/>
</dbReference>
<dbReference type="PANTHER" id="PTHR30050">
    <property type="entry name" value="CHROMOSOMAL REPLICATION INITIATOR PROTEIN DNAA"/>
    <property type="match status" value="1"/>
</dbReference>
<dbReference type="PANTHER" id="PTHR30050:SF2">
    <property type="entry name" value="CHROMOSOMAL REPLICATION INITIATOR PROTEIN DNAA"/>
    <property type="match status" value="1"/>
</dbReference>
<dbReference type="Pfam" id="PF00308">
    <property type="entry name" value="Bac_DnaA"/>
    <property type="match status" value="1"/>
</dbReference>
<dbReference type="Pfam" id="PF08299">
    <property type="entry name" value="Bac_DnaA_C"/>
    <property type="match status" value="1"/>
</dbReference>
<dbReference type="PRINTS" id="PR00051">
    <property type="entry name" value="DNAA"/>
</dbReference>
<dbReference type="SMART" id="SM00382">
    <property type="entry name" value="AAA"/>
    <property type="match status" value="1"/>
</dbReference>
<dbReference type="SMART" id="SM00760">
    <property type="entry name" value="Bac_DnaA_C"/>
    <property type="match status" value="1"/>
</dbReference>
<dbReference type="SUPFAM" id="SSF52540">
    <property type="entry name" value="P-loop containing nucleoside triphosphate hydrolases"/>
    <property type="match status" value="1"/>
</dbReference>
<dbReference type="SUPFAM" id="SSF48295">
    <property type="entry name" value="TrpR-like"/>
    <property type="match status" value="1"/>
</dbReference>
<dbReference type="PROSITE" id="PS01008">
    <property type="entry name" value="DNAA"/>
    <property type="match status" value="1"/>
</dbReference>
<protein>
    <recommendedName>
        <fullName evidence="1">Chromosomal replication initiator protein DnaA</fullName>
    </recommendedName>
</protein>
<feature type="chain" id="PRO_1000189803" description="Chromosomal replication initiator protein DnaA">
    <location>
        <begin position="1"/>
        <end position="507"/>
    </location>
</feature>
<feature type="region of interest" description="Domain I, interacts with DnaA modulators" evidence="1">
    <location>
        <begin position="1"/>
        <end position="112"/>
    </location>
</feature>
<feature type="region of interest" description="Disordered" evidence="2">
    <location>
        <begin position="99"/>
        <end position="162"/>
    </location>
</feature>
<feature type="region of interest" description="Domain II" evidence="1">
    <location>
        <begin position="113"/>
        <end position="166"/>
    </location>
</feature>
<feature type="region of interest" description="Domain III, AAA+ region" evidence="1">
    <location>
        <begin position="167"/>
        <end position="383"/>
    </location>
</feature>
<feature type="region of interest" description="Domain IV, binds dsDNA" evidence="1">
    <location>
        <begin position="384"/>
        <end position="507"/>
    </location>
</feature>
<feature type="compositionally biased region" description="Polar residues" evidence="2">
    <location>
        <begin position="113"/>
        <end position="127"/>
    </location>
</feature>
<feature type="binding site" evidence="1">
    <location>
        <position position="211"/>
    </location>
    <ligand>
        <name>ATP</name>
        <dbReference type="ChEBI" id="CHEBI:30616"/>
    </ligand>
</feature>
<feature type="binding site" evidence="1">
    <location>
        <position position="213"/>
    </location>
    <ligand>
        <name>ATP</name>
        <dbReference type="ChEBI" id="CHEBI:30616"/>
    </ligand>
</feature>
<feature type="binding site" evidence="1">
    <location>
        <position position="214"/>
    </location>
    <ligand>
        <name>ATP</name>
        <dbReference type="ChEBI" id="CHEBI:30616"/>
    </ligand>
</feature>
<feature type="binding site" evidence="1">
    <location>
        <position position="215"/>
    </location>
    <ligand>
        <name>ATP</name>
        <dbReference type="ChEBI" id="CHEBI:30616"/>
    </ligand>
</feature>
<keyword id="KW-0067">ATP-binding</keyword>
<keyword id="KW-0963">Cytoplasm</keyword>
<keyword id="KW-0235">DNA replication</keyword>
<keyword id="KW-0238">DNA-binding</keyword>
<keyword id="KW-0446">Lipid-binding</keyword>
<keyword id="KW-0547">Nucleotide-binding</keyword>
<evidence type="ECO:0000255" key="1">
    <source>
        <dbReference type="HAMAP-Rule" id="MF_00377"/>
    </source>
</evidence>
<evidence type="ECO:0000256" key="2">
    <source>
        <dbReference type="SAM" id="MobiDB-lite"/>
    </source>
</evidence>
<proteinExistence type="inferred from homology"/>
<sequence>MTDDPGSGFTTVWNAVVSELNGDPKVDDGPSSDANLSAPLTPQQRAWLNLVQPLTIVEGFALLSVPSSFVQNEIERHLRAPITDALSRRLGHQIQLGVRIAPPATDEADDTTVPPSENPATTSPDTTTDNDEIDDSAAARGDNQHSWPSYFTERPRNTDSATAGVTSLNRRYTFDTFVIGASNRFAHAAALAIAEAPARAYNPLFIWGESGLGKTHLLHAAGNYAQRLFPGMRVKYVSTEEFTNDFINSLRDDRKVAFKRSYRDVDVLLVDDIQFIEGKEGIQEEFFHTFNTLHNANKQIVISSDRPPKQLATLEDRLRTRFEWGLITDVQPPELETRIAILRKKAQMERLAVPDDVLELIASSIERNIRELEGALIRVTAFASLNKTPIDKALAEIVLRDLIADANTMQISAATIMAATAEYFDTTVEELRGPGKTRALAQSRQIAMYLCRELTDLSLPKIGQAFGRDHTTVMYAQRKILSEMAERREVFDHVKELTTRIRQRSKR</sequence>
<name>DNAA_MYCBT</name>
<organism>
    <name type="scientific">Mycobacterium bovis (strain BCG / Tokyo 172 / ATCC 35737 / TMC 1019)</name>
    <dbReference type="NCBI Taxonomy" id="561275"/>
    <lineage>
        <taxon>Bacteria</taxon>
        <taxon>Bacillati</taxon>
        <taxon>Actinomycetota</taxon>
        <taxon>Actinomycetes</taxon>
        <taxon>Mycobacteriales</taxon>
        <taxon>Mycobacteriaceae</taxon>
        <taxon>Mycobacterium</taxon>
        <taxon>Mycobacterium tuberculosis complex</taxon>
    </lineage>
</organism>
<accession>C1AIZ8</accession>
<comment type="function">
    <text evidence="1">Plays an essential role in the initiation and regulation of chromosomal replication. ATP-DnaA binds to the origin of replication (oriC) to initiate formation of the DNA replication initiation complex once per cell cycle. Binds the DnaA box (a 9 base pair repeat at the origin) and separates the double-stranded (ds)DNA. Forms a right-handed helical filament on oriC DNA; dsDNA binds to the exterior of the filament while single-stranded (ss)DNA is stabiized in the filament's interior. The ATP-DnaA-oriC complex binds and stabilizes one strand of the AT-rich DNA unwinding element (DUE), permitting loading of DNA polymerase. After initiation quickly degrades to an ADP-DnaA complex that is not apt for DNA replication. Binds acidic phospholipids.</text>
</comment>
<comment type="subunit">
    <text evidence="1">Oligomerizes as a right-handed, spiral filament on DNA at oriC.</text>
</comment>
<comment type="subcellular location">
    <subcellularLocation>
        <location evidence="1">Cytoplasm</location>
    </subcellularLocation>
</comment>
<comment type="domain">
    <text evidence="1">Domain I is involved in oligomerization and binding regulators, domain II is flexibile and of varying length in different bacteria, domain III forms the AAA+ region, while domain IV binds dsDNA.</text>
</comment>
<comment type="similarity">
    <text evidence="1">Belongs to the DnaA family.</text>
</comment>